<keyword id="KW-1048">Host nucleus</keyword>
<keyword id="KW-0597">Phosphoprotein</keyword>
<keyword id="KW-1185">Reference proteome</keyword>
<accession>P28279</accession>
<accession>O12511</accession>
<accession>Q89644</accession>
<organism>
    <name type="scientific">Human herpesvirus 2 (strain HG52)</name>
    <name type="common">HHV-2</name>
    <name type="synonym">Human herpes simplex virus 2</name>
    <dbReference type="NCBI Taxonomy" id="10315"/>
    <lineage>
        <taxon>Viruses</taxon>
        <taxon>Duplodnaviria</taxon>
        <taxon>Heunggongvirae</taxon>
        <taxon>Peploviricota</taxon>
        <taxon>Herviviricetes</taxon>
        <taxon>Herpesvirales</taxon>
        <taxon>Orthoherpesviridae</taxon>
        <taxon>Alphaherpesvirinae</taxon>
        <taxon>Simplexvirus</taxon>
        <taxon>Simplexvirus humanalpha2</taxon>
        <taxon>Human herpesvirus 2</taxon>
    </lineage>
</organism>
<feature type="chain" id="PRO_0000115894" description="Nuclear phosphoprotein UL3">
    <location>
        <begin position="1"/>
        <end position="233"/>
    </location>
</feature>
<feature type="region of interest" description="Disordered" evidence="2">
    <location>
        <begin position="38"/>
        <end position="88"/>
    </location>
</feature>
<feature type="sequence conflict" description="In Ref. 1; BAA01266." evidence="3" ref="1">
    <original>PGA</original>
    <variation>LAR</variation>
    <location>
        <begin position="41"/>
        <end position="43"/>
    </location>
</feature>
<reference key="1">
    <citation type="journal article" date="1991" name="J. Gen. Virol.">
        <title>Comparative sequence analysis of the long repeat regions and adjoining parts of the long unique regions in the genomes of herpes simplex viruses types 1 and 2.</title>
        <authorList>
            <person name="McGeoch D.J."/>
            <person name="Cunningham C."/>
            <person name="McIntyre G."/>
            <person name="Dolan A."/>
        </authorList>
    </citation>
    <scope>NUCLEOTIDE SEQUENCE [GENOMIC DNA]</scope>
</reference>
<reference key="2">
    <citation type="journal article" date="1998" name="J. Virol.">
        <title>The genome sequence of herpes simplex virus type 2.</title>
        <authorList>
            <person name="Dolan A."/>
            <person name="Jamieson F.E."/>
            <person name="Cunningham C."/>
            <person name="Barnett B.C."/>
            <person name="McGeoch D.J."/>
        </authorList>
    </citation>
    <scope>NUCLEOTIDE SEQUENCE [LARGE SCALE GENOMIC DNA]</scope>
</reference>
<dbReference type="EMBL" id="D10470">
    <property type="protein sequence ID" value="BAA01266.1"/>
    <property type="molecule type" value="Genomic_DNA"/>
</dbReference>
<dbReference type="EMBL" id="Z86099">
    <property type="protein sequence ID" value="CAB06763.1"/>
    <property type="molecule type" value="Genomic_DNA"/>
</dbReference>
<dbReference type="PIR" id="JQ1496">
    <property type="entry name" value="WMBEHK"/>
</dbReference>
<dbReference type="Proteomes" id="UP000001874">
    <property type="component" value="Segment"/>
</dbReference>
<dbReference type="GO" id="GO:0042025">
    <property type="term" value="C:host cell nucleus"/>
    <property type="evidence" value="ECO:0007669"/>
    <property type="project" value="UniProtKB-SubCell"/>
</dbReference>
<dbReference type="InterPro" id="IPR005035">
    <property type="entry name" value="Herpes_UL3"/>
</dbReference>
<dbReference type="Pfam" id="PF03369">
    <property type="entry name" value="Herpes_UL3"/>
    <property type="match status" value="1"/>
</dbReference>
<name>NP03_HHV2H</name>
<proteinExistence type="inferred from homology"/>
<protein>
    <recommendedName>
        <fullName>Nuclear phosphoprotein UL3</fullName>
    </recommendedName>
</protein>
<comment type="subcellular location">
    <subcellularLocation>
        <location evidence="1">Host nucleus</location>
    </subcellularLocation>
    <text evidence="1">Has a perinuclear location early in infection and at later times becomes associated with the nucleus as discrete particles.</text>
</comment>
<comment type="PTM">
    <text evidence="1">Phosphorylated.</text>
</comment>
<comment type="similarity">
    <text evidence="3">Belongs to the alphaherpesvirinae HHV-1 UL3 family.</text>
</comment>
<comment type="caution">
    <text evidence="3">It is uncertain whether Met-1 or Met-12 is the initiator.</text>
</comment>
<gene>
    <name type="ORF">UL3</name>
</gene>
<organismHost>
    <name type="scientific">Homo sapiens</name>
    <name type="common">Human</name>
    <dbReference type="NCBI Taxonomy" id="9606"/>
</organismHost>
<sequence length="233" mass="25534">MVKSRVSYRSVMSGVGEERVPSAFTILASWGWTFAPQNHDPGASPNTTPIESIAGTAPDAHVGPLDGEPDRDAISPLTSSVAGDPPGADGPYVTFDTLFMVSSIDELGRRQLTDTIRKDLRLSLAKFSIACTKTSSFSGTAARQRKRGAPPQRTCVPRSNKSLQMFVLCKRANAAQVREQLRAVIRSRKPRKYYTRSSDGRLCPAVPVFVHEFVSSEPMRLHRDNVMLSTEPD</sequence>
<evidence type="ECO:0000250" key="1"/>
<evidence type="ECO:0000256" key="2">
    <source>
        <dbReference type="SAM" id="MobiDB-lite"/>
    </source>
</evidence>
<evidence type="ECO:0000305" key="3"/>